<name>G432_FUSSX</name>
<comment type="function">
    <text evidence="3">Transcription factor; part of the gene cluster that mediates the biosynthesis of 1233A, a natural compound known as an inhibitor of HMG-CoA synthase in the mevalonate pathway and with antibacterial and antifungal activities (PubMed:32139880). Involved in hygromycin B-induced transcriptional control of the cluster (PubMed:32139880).</text>
</comment>
<comment type="subcellular location">
    <subcellularLocation>
        <location evidence="5">Nucleus</location>
    </subcellularLocation>
</comment>
<comment type="induction">
    <text evidence="3">Expression is increased upon exposure to hygromycin B.</text>
</comment>
<comment type="disruption phenotype">
    <text evidence="3">Impairs the ability to produce 1233A and 1233B.</text>
</comment>
<dbReference type="EMBL" id="LC516401">
    <property type="protein sequence ID" value="BBU37367.1"/>
    <property type="molecule type" value="Genomic_DNA"/>
</dbReference>
<dbReference type="SMR" id="A0A6S6AAU0"/>
<dbReference type="GO" id="GO:0005634">
    <property type="term" value="C:nucleus"/>
    <property type="evidence" value="ECO:0007669"/>
    <property type="project" value="UniProtKB-SubCell"/>
</dbReference>
<dbReference type="GO" id="GO:0000981">
    <property type="term" value="F:DNA-binding transcription factor activity, RNA polymerase II-specific"/>
    <property type="evidence" value="ECO:0007669"/>
    <property type="project" value="TreeGrafter"/>
</dbReference>
<dbReference type="GO" id="GO:0000978">
    <property type="term" value="F:RNA polymerase II cis-regulatory region sequence-specific DNA binding"/>
    <property type="evidence" value="ECO:0007669"/>
    <property type="project" value="TreeGrafter"/>
</dbReference>
<dbReference type="GO" id="GO:0000278">
    <property type="term" value="P:mitotic cell cycle"/>
    <property type="evidence" value="ECO:0007669"/>
    <property type="project" value="TreeGrafter"/>
</dbReference>
<dbReference type="GO" id="GO:0045944">
    <property type="term" value="P:positive regulation of transcription by RNA polymerase II"/>
    <property type="evidence" value="ECO:0007669"/>
    <property type="project" value="TreeGrafter"/>
</dbReference>
<dbReference type="CDD" id="cd00167">
    <property type="entry name" value="SANT"/>
    <property type="match status" value="2"/>
</dbReference>
<dbReference type="Gene3D" id="1.10.10.60">
    <property type="entry name" value="Homeodomain-like"/>
    <property type="match status" value="3"/>
</dbReference>
<dbReference type="InterPro" id="IPR009057">
    <property type="entry name" value="Homeodomain-like_sf"/>
</dbReference>
<dbReference type="InterPro" id="IPR017930">
    <property type="entry name" value="Myb_dom"/>
</dbReference>
<dbReference type="InterPro" id="IPR050560">
    <property type="entry name" value="MYB_TF"/>
</dbReference>
<dbReference type="InterPro" id="IPR001005">
    <property type="entry name" value="SANT/Myb"/>
</dbReference>
<dbReference type="PANTHER" id="PTHR45614">
    <property type="entry name" value="MYB PROTEIN-RELATED"/>
    <property type="match status" value="1"/>
</dbReference>
<dbReference type="PANTHER" id="PTHR45614:SF265">
    <property type="entry name" value="MYB-LIKE DOMAIN-CONTAINING PROTEIN-RELATED"/>
    <property type="match status" value="1"/>
</dbReference>
<dbReference type="Pfam" id="PF13921">
    <property type="entry name" value="Myb_DNA-bind_6"/>
    <property type="match status" value="1"/>
</dbReference>
<dbReference type="Pfam" id="PF00249">
    <property type="entry name" value="Myb_DNA-binding"/>
    <property type="match status" value="2"/>
</dbReference>
<dbReference type="SMART" id="SM00717">
    <property type="entry name" value="SANT"/>
    <property type="match status" value="3"/>
</dbReference>
<dbReference type="SUPFAM" id="SSF46689">
    <property type="entry name" value="Homeodomain-like"/>
    <property type="match status" value="2"/>
</dbReference>
<dbReference type="PROSITE" id="PS51294">
    <property type="entry name" value="HTH_MYB"/>
    <property type="match status" value="1"/>
</dbReference>
<dbReference type="PROSITE" id="PS50090">
    <property type="entry name" value="MYB_LIKE"/>
    <property type="match status" value="2"/>
</dbReference>
<keyword id="KW-0010">Activator</keyword>
<keyword id="KW-0238">DNA-binding</keyword>
<keyword id="KW-0539">Nucleus</keyword>
<keyword id="KW-0677">Repeat</keyword>
<keyword id="KW-0804">Transcription</keyword>
<keyword id="KW-0805">Transcription regulation</keyword>
<evidence type="ECO:0000255" key="1">
    <source>
        <dbReference type="PROSITE-ProRule" id="PRU00133"/>
    </source>
</evidence>
<evidence type="ECO:0000256" key="2">
    <source>
        <dbReference type="SAM" id="MobiDB-lite"/>
    </source>
</evidence>
<evidence type="ECO:0000269" key="3">
    <source>
    </source>
</evidence>
<evidence type="ECO:0000303" key="4">
    <source>
    </source>
</evidence>
<evidence type="ECO:0000305" key="5">
    <source>
    </source>
</evidence>
<gene>
    <name evidence="4" type="primary">g432</name>
</gene>
<proteinExistence type="evidence at transcript level"/>
<feature type="chain" id="PRO_0000454631" description="Myb-like transcription factor">
    <location>
        <begin position="1"/>
        <end position="382"/>
    </location>
</feature>
<feature type="domain" description="Myb-like 1" evidence="1">
    <location>
        <begin position="1"/>
        <end position="57"/>
    </location>
</feature>
<feature type="domain" description="Myb-like 2" evidence="1">
    <location>
        <begin position="58"/>
        <end position="108"/>
    </location>
</feature>
<feature type="domain" description="Myb-like 3" evidence="1">
    <location>
        <begin position="109"/>
        <end position="160"/>
    </location>
</feature>
<feature type="region of interest" description="Disordered" evidence="2">
    <location>
        <begin position="194"/>
        <end position="240"/>
    </location>
</feature>
<feature type="compositionally biased region" description="Acidic residues" evidence="2">
    <location>
        <begin position="194"/>
        <end position="210"/>
    </location>
</feature>
<feature type="compositionally biased region" description="Polar residues" evidence="2">
    <location>
        <begin position="211"/>
        <end position="240"/>
    </location>
</feature>
<sequence length="382" mass="42157">MPRSPRRWTPEEDRVLLDKVKQLFSDGAKNDTTISWATVANALPDRNNKDCRKRWSKITGAKKGSWSLSEDEQLLEGVQKYGRQWAMVAKGVETRSADQCAKRWQHCLDPSLDRSEWRSDQDARLVAAVRRYGTNWKDIKKFEFPKRSTTNLKNRHITLFRQRNKAPGACPGSTETLGPGIDWWSMEQGMIDDMSMDASEDGDDAEDDQTPDSYTSISTSSFDDILGGSSSSPSAADTMTTASPDPYQYLLDWAVPSHADLVQAATSYYPSLDGFLGSTYDHNAKIDSSLGRDANGGNFIPGFPTQTPSQFESIDVSQISDGIVSGEPSRQGASRECRAASNVSSGPQMTLTIDNPDPQTMTGILEVLAKANSKVTISMNRE</sequence>
<protein>
    <recommendedName>
        <fullName evidence="4">Myb-like transcription factor</fullName>
    </recommendedName>
    <alternativeName>
        <fullName evidence="4">1233A biosynthesis cluster protein g432</fullName>
    </alternativeName>
</protein>
<accession>A0A6S6AAU0</accession>
<reference key="1">
    <citation type="journal article" date="2020" name="J. Antibiot.">
        <title>Induction of secondary metabolite production by hygromycin B and identification of the 1233A biosynthetic gene cluster with a self-resistance gene.</title>
        <authorList>
            <person name="Kato S."/>
            <person name="Motoyama T."/>
            <person name="Uramoto M."/>
            <person name="Nogawa T."/>
            <person name="Kamakura T."/>
            <person name="Osada H."/>
        </authorList>
    </citation>
    <scope>NUCLEOTIDE SEQUENCE [GENOMIC DNA]</scope>
    <scope>FUNCTION</scope>
    <scope>INDUCTION</scope>
    <scope>DISRUPTION PHENOTYPE</scope>
    <source>
        <strain>RK97-94</strain>
    </source>
</reference>
<organism>
    <name type="scientific">Fusarium sp</name>
    <dbReference type="NCBI Taxonomy" id="29916"/>
    <lineage>
        <taxon>Eukaryota</taxon>
        <taxon>Fungi</taxon>
        <taxon>Dikarya</taxon>
        <taxon>Ascomycota</taxon>
        <taxon>Pezizomycotina</taxon>
        <taxon>Sordariomycetes</taxon>
        <taxon>Hypocreomycetidae</taxon>
        <taxon>Hypocreales</taxon>
        <taxon>Nectriaceae</taxon>
        <taxon>Fusarium</taxon>
    </lineage>
</organism>